<feature type="chain" id="PRO_0000161904" description="23S rRNA (uracil(1939)-C(5))-methyltransferase RlmD">
    <location>
        <begin position="1"/>
        <end position="437"/>
    </location>
</feature>
<feature type="domain" description="TRAM" evidence="1">
    <location>
        <begin position="10"/>
        <end position="68"/>
    </location>
</feature>
<feature type="active site" description="Nucleophile" evidence="1">
    <location>
        <position position="394"/>
    </location>
</feature>
<feature type="binding site" evidence="1">
    <location>
        <position position="81"/>
    </location>
    <ligand>
        <name>[4Fe-4S] cluster</name>
        <dbReference type="ChEBI" id="CHEBI:49883"/>
    </ligand>
</feature>
<feature type="binding site" evidence="1">
    <location>
        <position position="87"/>
    </location>
    <ligand>
        <name>[4Fe-4S] cluster</name>
        <dbReference type="ChEBI" id="CHEBI:49883"/>
    </ligand>
</feature>
<feature type="binding site" evidence="1">
    <location>
        <position position="90"/>
    </location>
    <ligand>
        <name>[4Fe-4S] cluster</name>
        <dbReference type="ChEBI" id="CHEBI:49883"/>
    </ligand>
</feature>
<feature type="binding site" evidence="1">
    <location>
        <position position="167"/>
    </location>
    <ligand>
        <name>[4Fe-4S] cluster</name>
        <dbReference type="ChEBI" id="CHEBI:49883"/>
    </ligand>
</feature>
<feature type="binding site" evidence="1">
    <location>
        <position position="270"/>
    </location>
    <ligand>
        <name>S-adenosyl-L-methionine</name>
        <dbReference type="ChEBI" id="CHEBI:59789"/>
    </ligand>
</feature>
<feature type="binding site" evidence="1">
    <location>
        <position position="299"/>
    </location>
    <ligand>
        <name>S-adenosyl-L-methionine</name>
        <dbReference type="ChEBI" id="CHEBI:59789"/>
    </ligand>
</feature>
<feature type="binding site" evidence="1">
    <location>
        <position position="304"/>
    </location>
    <ligand>
        <name>S-adenosyl-L-methionine</name>
        <dbReference type="ChEBI" id="CHEBI:59789"/>
    </ligand>
</feature>
<feature type="binding site" evidence="1">
    <location>
        <position position="320"/>
    </location>
    <ligand>
        <name>S-adenosyl-L-methionine</name>
        <dbReference type="ChEBI" id="CHEBI:59789"/>
    </ligand>
</feature>
<feature type="binding site" evidence="1">
    <location>
        <position position="347"/>
    </location>
    <ligand>
        <name>S-adenosyl-L-methionine</name>
        <dbReference type="ChEBI" id="CHEBI:59789"/>
    </ligand>
</feature>
<feature type="binding site" evidence="1">
    <location>
        <position position="368"/>
    </location>
    <ligand>
        <name>S-adenosyl-L-methionine</name>
        <dbReference type="ChEBI" id="CHEBI:59789"/>
    </ligand>
</feature>
<keyword id="KW-0004">4Fe-4S</keyword>
<keyword id="KW-0408">Iron</keyword>
<keyword id="KW-0411">Iron-sulfur</keyword>
<keyword id="KW-0479">Metal-binding</keyword>
<keyword id="KW-0489">Methyltransferase</keyword>
<keyword id="KW-1185">Reference proteome</keyword>
<keyword id="KW-0698">rRNA processing</keyword>
<keyword id="KW-0949">S-adenosyl-L-methionine</keyword>
<keyword id="KW-0808">Transferase</keyword>
<name>RLMD_PASMU</name>
<reference key="1">
    <citation type="journal article" date="2001" name="Proc. Natl. Acad. Sci. U.S.A.">
        <title>Complete genomic sequence of Pasteurella multocida Pm70.</title>
        <authorList>
            <person name="May B.J."/>
            <person name="Zhang Q."/>
            <person name="Li L.L."/>
            <person name="Paustian M.L."/>
            <person name="Whittam T.S."/>
            <person name="Kapur V."/>
        </authorList>
    </citation>
    <scope>NUCLEOTIDE SEQUENCE [LARGE SCALE GENOMIC DNA]</scope>
    <source>
        <strain>Pm70</strain>
    </source>
</reference>
<sequence>MVLHYTPHQSAPRNTTFVAEILDLDYQGRGVAKVQGKTWFIENALPQEKVEVRIVDEKRHYGHGISCKILTPHPDRQSAKCAYYAQCGGCQSQHIPIDMQRQAKQQALFQRLQQLQPQATFMPMIVAAPWHYRRRVRLSVRFHPKSKQLAMGLRQRNTQQIVNLQHCDVLEIPLSQLLPKLHLLFSTWSLPKNLGHVELVHADNGIAMLLRHTGNLAQTDRTLLTNFAQQENLMLFVQDDQQITQLHGEAPYYILRDGTKLQFDIRDFIQVNAVVNQKMIDTALEWLELTSNDNVLDLFCGMGNFTLPISRQVNQVVGIEGVGEMVEKAKRNAEQNQCDNVQFYQANLDQPFVQQHWASQHFNKILLDPPRTGAAFALHALCELGAEKILYVSCNPATLVRDTAILLQFNYRLKKVAMIDMFPNTGHLESISLFEKE</sequence>
<evidence type="ECO:0000255" key="1">
    <source>
        <dbReference type="HAMAP-Rule" id="MF_01010"/>
    </source>
</evidence>
<comment type="function">
    <text evidence="1">Catalyzes the formation of 5-methyl-uridine at position 1939 (m5U1939) in 23S rRNA.</text>
</comment>
<comment type="catalytic activity">
    <reaction evidence="1">
        <text>uridine(1939) in 23S rRNA + S-adenosyl-L-methionine = 5-methyluridine(1939) in 23S rRNA + S-adenosyl-L-homocysteine + H(+)</text>
        <dbReference type="Rhea" id="RHEA:42908"/>
        <dbReference type="Rhea" id="RHEA-COMP:10278"/>
        <dbReference type="Rhea" id="RHEA-COMP:10279"/>
        <dbReference type="ChEBI" id="CHEBI:15378"/>
        <dbReference type="ChEBI" id="CHEBI:57856"/>
        <dbReference type="ChEBI" id="CHEBI:59789"/>
        <dbReference type="ChEBI" id="CHEBI:65315"/>
        <dbReference type="ChEBI" id="CHEBI:74447"/>
        <dbReference type="EC" id="2.1.1.190"/>
    </reaction>
</comment>
<comment type="similarity">
    <text evidence="1">Belongs to the class I-like SAM-binding methyltransferase superfamily. RNA M5U methyltransferase family. RlmD subfamily.</text>
</comment>
<accession>Q9CJX3</accession>
<organism>
    <name type="scientific">Pasteurella multocida (strain Pm70)</name>
    <dbReference type="NCBI Taxonomy" id="272843"/>
    <lineage>
        <taxon>Bacteria</taxon>
        <taxon>Pseudomonadati</taxon>
        <taxon>Pseudomonadota</taxon>
        <taxon>Gammaproteobacteria</taxon>
        <taxon>Pasteurellales</taxon>
        <taxon>Pasteurellaceae</taxon>
        <taxon>Pasteurella</taxon>
    </lineage>
</organism>
<dbReference type="EC" id="2.1.1.190" evidence="1"/>
<dbReference type="EMBL" id="AE004439">
    <property type="protein sequence ID" value="AAK03950.1"/>
    <property type="molecule type" value="Genomic_DNA"/>
</dbReference>
<dbReference type="RefSeq" id="WP_010907388.1">
    <property type="nucleotide sequence ID" value="NC_002663.1"/>
</dbReference>
<dbReference type="SMR" id="Q9CJX3"/>
<dbReference type="STRING" id="272843.PM1866"/>
<dbReference type="EnsemblBacteria" id="AAK03950">
    <property type="protein sequence ID" value="AAK03950"/>
    <property type="gene ID" value="PM1866"/>
</dbReference>
<dbReference type="KEGG" id="pmu:PM1866"/>
<dbReference type="PATRIC" id="fig|272843.6.peg.1888"/>
<dbReference type="HOGENOM" id="CLU_014689_8_2_6"/>
<dbReference type="OrthoDB" id="9804590at2"/>
<dbReference type="Proteomes" id="UP000000809">
    <property type="component" value="Chromosome"/>
</dbReference>
<dbReference type="GO" id="GO:0051539">
    <property type="term" value="F:4 iron, 4 sulfur cluster binding"/>
    <property type="evidence" value="ECO:0007669"/>
    <property type="project" value="UniProtKB-KW"/>
</dbReference>
<dbReference type="GO" id="GO:0005506">
    <property type="term" value="F:iron ion binding"/>
    <property type="evidence" value="ECO:0007669"/>
    <property type="project" value="UniProtKB-UniRule"/>
</dbReference>
<dbReference type="GO" id="GO:0003723">
    <property type="term" value="F:RNA binding"/>
    <property type="evidence" value="ECO:0007669"/>
    <property type="project" value="InterPro"/>
</dbReference>
<dbReference type="GO" id="GO:0070041">
    <property type="term" value="F:rRNA (uridine-C5-)-methyltransferase activity"/>
    <property type="evidence" value="ECO:0007669"/>
    <property type="project" value="UniProtKB-UniRule"/>
</dbReference>
<dbReference type="GO" id="GO:0070475">
    <property type="term" value="P:rRNA base methylation"/>
    <property type="evidence" value="ECO:0007669"/>
    <property type="project" value="TreeGrafter"/>
</dbReference>
<dbReference type="CDD" id="cd02440">
    <property type="entry name" value="AdoMet_MTases"/>
    <property type="match status" value="1"/>
</dbReference>
<dbReference type="FunFam" id="3.40.50.150:FF:000009">
    <property type="entry name" value="23S rRNA (Uracil(1939)-C(5))-methyltransferase RlmD"/>
    <property type="match status" value="1"/>
</dbReference>
<dbReference type="Gene3D" id="2.40.50.1070">
    <property type="match status" value="1"/>
</dbReference>
<dbReference type="Gene3D" id="2.40.50.140">
    <property type="entry name" value="Nucleic acid-binding proteins"/>
    <property type="match status" value="1"/>
</dbReference>
<dbReference type="Gene3D" id="3.40.50.150">
    <property type="entry name" value="Vaccinia Virus protein VP39"/>
    <property type="match status" value="1"/>
</dbReference>
<dbReference type="HAMAP" id="MF_01010">
    <property type="entry name" value="23SrRNA_methyltr_RlmD"/>
    <property type="match status" value="1"/>
</dbReference>
<dbReference type="InterPro" id="IPR001566">
    <property type="entry name" value="23S_rRNA_MeTrfase_RlmD"/>
</dbReference>
<dbReference type="InterPro" id="IPR030390">
    <property type="entry name" value="MeTrfase_TrmA_AS"/>
</dbReference>
<dbReference type="InterPro" id="IPR012340">
    <property type="entry name" value="NA-bd_OB-fold"/>
</dbReference>
<dbReference type="InterPro" id="IPR029063">
    <property type="entry name" value="SAM-dependent_MTases_sf"/>
</dbReference>
<dbReference type="InterPro" id="IPR002792">
    <property type="entry name" value="TRAM_dom"/>
</dbReference>
<dbReference type="InterPro" id="IPR010280">
    <property type="entry name" value="U5_MeTrfase_fam"/>
</dbReference>
<dbReference type="NCBIfam" id="NF009639">
    <property type="entry name" value="PRK13168.1"/>
    <property type="match status" value="1"/>
</dbReference>
<dbReference type="NCBIfam" id="TIGR00479">
    <property type="entry name" value="rumA"/>
    <property type="match status" value="1"/>
</dbReference>
<dbReference type="PANTHER" id="PTHR11061:SF49">
    <property type="entry name" value="23S RRNA (URACIL(1939)-C(5))-METHYLTRANSFERASE RLMD"/>
    <property type="match status" value="1"/>
</dbReference>
<dbReference type="PANTHER" id="PTHR11061">
    <property type="entry name" value="RNA M5U METHYLTRANSFERASE"/>
    <property type="match status" value="1"/>
</dbReference>
<dbReference type="Pfam" id="PF01938">
    <property type="entry name" value="TRAM"/>
    <property type="match status" value="1"/>
</dbReference>
<dbReference type="Pfam" id="PF05958">
    <property type="entry name" value="tRNA_U5-meth_tr"/>
    <property type="match status" value="1"/>
</dbReference>
<dbReference type="SUPFAM" id="SSF50249">
    <property type="entry name" value="Nucleic acid-binding proteins"/>
    <property type="match status" value="1"/>
</dbReference>
<dbReference type="SUPFAM" id="SSF53335">
    <property type="entry name" value="S-adenosyl-L-methionine-dependent methyltransferases"/>
    <property type="match status" value="1"/>
</dbReference>
<dbReference type="PROSITE" id="PS51687">
    <property type="entry name" value="SAM_MT_RNA_M5U"/>
    <property type="match status" value="1"/>
</dbReference>
<dbReference type="PROSITE" id="PS50926">
    <property type="entry name" value="TRAM"/>
    <property type="match status" value="1"/>
</dbReference>
<dbReference type="PROSITE" id="PS01230">
    <property type="entry name" value="TRMA_1"/>
    <property type="match status" value="1"/>
</dbReference>
<gene>
    <name evidence="1" type="primary">rlmD</name>
    <name type="synonym">rumA</name>
    <name type="ordered locus">PM1866</name>
</gene>
<protein>
    <recommendedName>
        <fullName evidence="1">23S rRNA (uracil(1939)-C(5))-methyltransferase RlmD</fullName>
        <ecNumber evidence="1">2.1.1.190</ecNumber>
    </recommendedName>
    <alternativeName>
        <fullName evidence="1">23S rRNA(m5U1939)-methyltransferase</fullName>
    </alternativeName>
</protein>
<proteinExistence type="inferred from homology"/>